<keyword id="KW-0963">Cytoplasm</keyword>
<keyword id="KW-0342">GTP-binding</keyword>
<keyword id="KW-0378">Hydrolase</keyword>
<keyword id="KW-0460">Magnesium</keyword>
<keyword id="KW-0479">Metal-binding</keyword>
<keyword id="KW-0547">Nucleotide-binding</keyword>
<keyword id="KW-0630">Potassium</keyword>
<keyword id="KW-1185">Reference proteome</keyword>
<keyword id="KW-0819">tRNA processing</keyword>
<evidence type="ECO:0000255" key="1">
    <source>
        <dbReference type="HAMAP-Rule" id="MF_00379"/>
    </source>
</evidence>
<accession>A3QJT0</accession>
<proteinExistence type="inferred from homology"/>
<comment type="function">
    <text evidence="1">Exhibits a very high intrinsic GTPase hydrolysis rate. Involved in the addition of a carboxymethylaminomethyl (cmnm) group at the wobble position (U34) of certain tRNAs, forming tRNA-cmnm(5)s(2)U34.</text>
</comment>
<comment type="cofactor">
    <cofactor evidence="1">
        <name>K(+)</name>
        <dbReference type="ChEBI" id="CHEBI:29103"/>
    </cofactor>
    <text evidence="1">Binds 1 potassium ion per subunit.</text>
</comment>
<comment type="subunit">
    <text evidence="1">Homodimer. Heterotetramer of two MnmE and two MnmG subunits.</text>
</comment>
<comment type="subcellular location">
    <subcellularLocation>
        <location evidence="1">Cytoplasm</location>
    </subcellularLocation>
</comment>
<comment type="similarity">
    <text evidence="1">Belongs to the TRAFAC class TrmE-Era-EngA-EngB-Septin-like GTPase superfamily. TrmE GTPase family.</text>
</comment>
<organism>
    <name type="scientific">Shewanella loihica (strain ATCC BAA-1088 / PV-4)</name>
    <dbReference type="NCBI Taxonomy" id="323850"/>
    <lineage>
        <taxon>Bacteria</taxon>
        <taxon>Pseudomonadati</taxon>
        <taxon>Pseudomonadota</taxon>
        <taxon>Gammaproteobacteria</taxon>
        <taxon>Alteromonadales</taxon>
        <taxon>Shewanellaceae</taxon>
        <taxon>Shewanella</taxon>
    </lineage>
</organism>
<name>MNME_SHELP</name>
<sequence>MTTDTIVAQATAPGRGGVGIIRVSGDKASDVAMAVLGHLPKVRYADYCDFKAADGAVIDQGIALYFKGPNSFTGEDVLELQGHGGQVVLDMLIKRVMDVDGVRIAKPGEFSEQAFMNDKLDLTQAEAIADLIDATSEQAAKSALNSLQGEFSTQVHELVDQVTNLRLYVEAAIDFPDEEVDFLSDGKIAASLGKIITKLDSVQSSAKQGAIIREGMKVVIAGRPNAGKSSLLNALAGKESAIVTEIAGTTRDVLREHIHLDGMPLHIIDTAGLRDTTDTVEQIGIERAWAEIETADQVLFMVDGTTTDAVDPHDIWPDFIDRLPKNLGVTVVRNKADLTGESLDATDEQGHKVFRLSAKTGSGVDELKAHLKSLMGYQSNLEGGFLARRRHLEALELASSHLALGQEQLEVYQAGELLAEELRMCQLALSEITGKFTSDDLLGKIFSSFCIGK</sequence>
<gene>
    <name evidence="1" type="primary">mnmE</name>
    <name evidence="1" type="synonym">trmE</name>
    <name type="ordered locus">Shew_3865</name>
</gene>
<reference key="1">
    <citation type="submission" date="2007-03" db="EMBL/GenBank/DDBJ databases">
        <title>Complete sequence of Shewanella loihica PV-4.</title>
        <authorList>
            <consortium name="US DOE Joint Genome Institute"/>
            <person name="Copeland A."/>
            <person name="Lucas S."/>
            <person name="Lapidus A."/>
            <person name="Barry K."/>
            <person name="Detter J.C."/>
            <person name="Glavina del Rio T."/>
            <person name="Hammon N."/>
            <person name="Israni S."/>
            <person name="Dalin E."/>
            <person name="Tice H."/>
            <person name="Pitluck S."/>
            <person name="Chain P."/>
            <person name="Malfatti S."/>
            <person name="Shin M."/>
            <person name="Vergez L."/>
            <person name="Schmutz J."/>
            <person name="Larimer F."/>
            <person name="Land M."/>
            <person name="Hauser L."/>
            <person name="Kyrpides N."/>
            <person name="Mikhailova N."/>
            <person name="Romine M.F."/>
            <person name="Serres G."/>
            <person name="Fredrickson J."/>
            <person name="Tiedje J."/>
            <person name="Richardson P."/>
        </authorList>
    </citation>
    <scope>NUCLEOTIDE SEQUENCE [LARGE SCALE GENOMIC DNA]</scope>
    <source>
        <strain>ATCC BAA-1088 / PV-4</strain>
    </source>
</reference>
<protein>
    <recommendedName>
        <fullName evidence="1">tRNA modification GTPase MnmE</fullName>
        <ecNumber evidence="1">3.6.-.-</ecNumber>
    </recommendedName>
</protein>
<feature type="chain" id="PRO_1000048875" description="tRNA modification GTPase MnmE">
    <location>
        <begin position="1"/>
        <end position="453"/>
    </location>
</feature>
<feature type="domain" description="TrmE-type G">
    <location>
        <begin position="215"/>
        <end position="376"/>
    </location>
</feature>
<feature type="binding site" evidence="1">
    <location>
        <position position="22"/>
    </location>
    <ligand>
        <name>(6S)-5-formyl-5,6,7,8-tetrahydrofolate</name>
        <dbReference type="ChEBI" id="CHEBI:57457"/>
    </ligand>
</feature>
<feature type="binding site" evidence="1">
    <location>
        <position position="79"/>
    </location>
    <ligand>
        <name>(6S)-5-formyl-5,6,7,8-tetrahydrofolate</name>
        <dbReference type="ChEBI" id="CHEBI:57457"/>
    </ligand>
</feature>
<feature type="binding site" evidence="1">
    <location>
        <position position="119"/>
    </location>
    <ligand>
        <name>(6S)-5-formyl-5,6,7,8-tetrahydrofolate</name>
        <dbReference type="ChEBI" id="CHEBI:57457"/>
    </ligand>
</feature>
<feature type="binding site" evidence="1">
    <location>
        <begin position="225"/>
        <end position="230"/>
    </location>
    <ligand>
        <name>GTP</name>
        <dbReference type="ChEBI" id="CHEBI:37565"/>
    </ligand>
</feature>
<feature type="binding site" evidence="1">
    <location>
        <position position="225"/>
    </location>
    <ligand>
        <name>K(+)</name>
        <dbReference type="ChEBI" id="CHEBI:29103"/>
    </ligand>
</feature>
<feature type="binding site" evidence="1">
    <location>
        <position position="229"/>
    </location>
    <ligand>
        <name>Mg(2+)</name>
        <dbReference type="ChEBI" id="CHEBI:18420"/>
    </ligand>
</feature>
<feature type="binding site" evidence="1">
    <location>
        <begin position="244"/>
        <end position="250"/>
    </location>
    <ligand>
        <name>GTP</name>
        <dbReference type="ChEBI" id="CHEBI:37565"/>
    </ligand>
</feature>
<feature type="binding site" evidence="1">
    <location>
        <position position="244"/>
    </location>
    <ligand>
        <name>K(+)</name>
        <dbReference type="ChEBI" id="CHEBI:29103"/>
    </ligand>
</feature>
<feature type="binding site" evidence="1">
    <location>
        <position position="246"/>
    </location>
    <ligand>
        <name>K(+)</name>
        <dbReference type="ChEBI" id="CHEBI:29103"/>
    </ligand>
</feature>
<feature type="binding site" evidence="1">
    <location>
        <position position="249"/>
    </location>
    <ligand>
        <name>K(+)</name>
        <dbReference type="ChEBI" id="CHEBI:29103"/>
    </ligand>
</feature>
<feature type="binding site" evidence="1">
    <location>
        <position position="250"/>
    </location>
    <ligand>
        <name>Mg(2+)</name>
        <dbReference type="ChEBI" id="CHEBI:18420"/>
    </ligand>
</feature>
<feature type="binding site" evidence="1">
    <location>
        <begin position="269"/>
        <end position="272"/>
    </location>
    <ligand>
        <name>GTP</name>
        <dbReference type="ChEBI" id="CHEBI:37565"/>
    </ligand>
</feature>
<feature type="binding site" evidence="1">
    <location>
        <begin position="334"/>
        <end position="337"/>
    </location>
    <ligand>
        <name>GTP</name>
        <dbReference type="ChEBI" id="CHEBI:37565"/>
    </ligand>
</feature>
<feature type="binding site" evidence="1">
    <location>
        <position position="453"/>
    </location>
    <ligand>
        <name>(6S)-5-formyl-5,6,7,8-tetrahydrofolate</name>
        <dbReference type="ChEBI" id="CHEBI:57457"/>
    </ligand>
</feature>
<dbReference type="EC" id="3.6.-.-" evidence="1"/>
<dbReference type="EMBL" id="CP000606">
    <property type="protein sequence ID" value="ABO25728.1"/>
    <property type="molecule type" value="Genomic_DNA"/>
</dbReference>
<dbReference type="RefSeq" id="WP_011867655.1">
    <property type="nucleotide sequence ID" value="NC_009092.1"/>
</dbReference>
<dbReference type="SMR" id="A3QJT0"/>
<dbReference type="STRING" id="323850.Shew_3865"/>
<dbReference type="KEGG" id="slo:Shew_3865"/>
<dbReference type="eggNOG" id="COG0486">
    <property type="taxonomic scope" value="Bacteria"/>
</dbReference>
<dbReference type="HOGENOM" id="CLU_019624_4_1_6"/>
<dbReference type="OrthoDB" id="9805918at2"/>
<dbReference type="Proteomes" id="UP000001558">
    <property type="component" value="Chromosome"/>
</dbReference>
<dbReference type="GO" id="GO:0005829">
    <property type="term" value="C:cytosol"/>
    <property type="evidence" value="ECO:0007669"/>
    <property type="project" value="TreeGrafter"/>
</dbReference>
<dbReference type="GO" id="GO:0005525">
    <property type="term" value="F:GTP binding"/>
    <property type="evidence" value="ECO:0007669"/>
    <property type="project" value="UniProtKB-UniRule"/>
</dbReference>
<dbReference type="GO" id="GO:0003924">
    <property type="term" value="F:GTPase activity"/>
    <property type="evidence" value="ECO:0007669"/>
    <property type="project" value="UniProtKB-UniRule"/>
</dbReference>
<dbReference type="GO" id="GO:0046872">
    <property type="term" value="F:metal ion binding"/>
    <property type="evidence" value="ECO:0007669"/>
    <property type="project" value="UniProtKB-KW"/>
</dbReference>
<dbReference type="GO" id="GO:0030488">
    <property type="term" value="P:tRNA methylation"/>
    <property type="evidence" value="ECO:0007669"/>
    <property type="project" value="TreeGrafter"/>
</dbReference>
<dbReference type="GO" id="GO:0002098">
    <property type="term" value="P:tRNA wobble uridine modification"/>
    <property type="evidence" value="ECO:0007669"/>
    <property type="project" value="TreeGrafter"/>
</dbReference>
<dbReference type="CDD" id="cd04164">
    <property type="entry name" value="trmE"/>
    <property type="match status" value="1"/>
</dbReference>
<dbReference type="CDD" id="cd14858">
    <property type="entry name" value="TrmE_N"/>
    <property type="match status" value="1"/>
</dbReference>
<dbReference type="FunFam" id="3.30.1360.120:FF:000001">
    <property type="entry name" value="tRNA modification GTPase MnmE"/>
    <property type="match status" value="1"/>
</dbReference>
<dbReference type="FunFam" id="3.40.50.300:FF:000249">
    <property type="entry name" value="tRNA modification GTPase MnmE"/>
    <property type="match status" value="1"/>
</dbReference>
<dbReference type="Gene3D" id="3.40.50.300">
    <property type="entry name" value="P-loop containing nucleotide triphosphate hydrolases"/>
    <property type="match status" value="1"/>
</dbReference>
<dbReference type="Gene3D" id="3.30.1360.120">
    <property type="entry name" value="Probable tRNA modification gtpase trme, domain 1"/>
    <property type="match status" value="1"/>
</dbReference>
<dbReference type="Gene3D" id="1.20.120.430">
    <property type="entry name" value="tRNA modification GTPase MnmE domain 2"/>
    <property type="match status" value="1"/>
</dbReference>
<dbReference type="HAMAP" id="MF_00379">
    <property type="entry name" value="GTPase_MnmE"/>
    <property type="match status" value="1"/>
</dbReference>
<dbReference type="InterPro" id="IPR031168">
    <property type="entry name" value="G_TrmE"/>
</dbReference>
<dbReference type="InterPro" id="IPR006073">
    <property type="entry name" value="GTP-bd"/>
</dbReference>
<dbReference type="InterPro" id="IPR018948">
    <property type="entry name" value="GTP-bd_TrmE_N"/>
</dbReference>
<dbReference type="InterPro" id="IPR004520">
    <property type="entry name" value="GTPase_MnmE"/>
</dbReference>
<dbReference type="InterPro" id="IPR027368">
    <property type="entry name" value="MnmE_dom2"/>
</dbReference>
<dbReference type="InterPro" id="IPR025867">
    <property type="entry name" value="MnmE_helical"/>
</dbReference>
<dbReference type="InterPro" id="IPR027417">
    <property type="entry name" value="P-loop_NTPase"/>
</dbReference>
<dbReference type="InterPro" id="IPR005225">
    <property type="entry name" value="Small_GTP-bd"/>
</dbReference>
<dbReference type="InterPro" id="IPR027266">
    <property type="entry name" value="TrmE/GcvT_dom1"/>
</dbReference>
<dbReference type="NCBIfam" id="TIGR00450">
    <property type="entry name" value="mnmE_trmE_thdF"/>
    <property type="match status" value="1"/>
</dbReference>
<dbReference type="NCBIfam" id="NF003661">
    <property type="entry name" value="PRK05291.1-3"/>
    <property type="match status" value="1"/>
</dbReference>
<dbReference type="NCBIfam" id="TIGR00231">
    <property type="entry name" value="small_GTP"/>
    <property type="match status" value="1"/>
</dbReference>
<dbReference type="PANTHER" id="PTHR42714">
    <property type="entry name" value="TRNA MODIFICATION GTPASE GTPBP3"/>
    <property type="match status" value="1"/>
</dbReference>
<dbReference type="PANTHER" id="PTHR42714:SF2">
    <property type="entry name" value="TRNA MODIFICATION GTPASE GTPBP3, MITOCHONDRIAL"/>
    <property type="match status" value="1"/>
</dbReference>
<dbReference type="Pfam" id="PF01926">
    <property type="entry name" value="MMR_HSR1"/>
    <property type="match status" value="1"/>
</dbReference>
<dbReference type="Pfam" id="PF12631">
    <property type="entry name" value="MnmE_helical"/>
    <property type="match status" value="1"/>
</dbReference>
<dbReference type="Pfam" id="PF10396">
    <property type="entry name" value="TrmE_N"/>
    <property type="match status" value="1"/>
</dbReference>
<dbReference type="SUPFAM" id="SSF52540">
    <property type="entry name" value="P-loop containing nucleoside triphosphate hydrolases"/>
    <property type="match status" value="1"/>
</dbReference>
<dbReference type="SUPFAM" id="SSF116878">
    <property type="entry name" value="TrmE connector domain"/>
    <property type="match status" value="1"/>
</dbReference>
<dbReference type="PROSITE" id="PS51709">
    <property type="entry name" value="G_TRME"/>
    <property type="match status" value="1"/>
</dbReference>